<accession>Q1WT18</accession>
<sequence>MYDEERIVSGDSFEGEDLNEQSLRPQTFDQYIGQKLLKDEISVYIQAAKQREESLDHVLLYGPPGLGKTTLAIVIANEMGVKIKTTTGPAIEKPGDLVALLNELEPGDVLFIDEIHRLPKNVEEILYSAMEDYFIDIIVGQGPTAHPVHFPLPPFTLVGATTRAGLLSAPLRARFGIVGHMEYYNEVDLSQIIKRSAQILSTGIDDEGAHEIARRSRGTPRVANRLLKRVRDFAEVKHKDKIDTEIVQFALDLLRVDKVGLDRTDRKLLKAMIELYDGGPVGLNTIAANIGEESDTIADMIEPYLMQIGFIKRTPRGRMVTLAAYEHLGIKYNKEG</sequence>
<keyword id="KW-0067">ATP-binding</keyword>
<keyword id="KW-0963">Cytoplasm</keyword>
<keyword id="KW-0227">DNA damage</keyword>
<keyword id="KW-0233">DNA recombination</keyword>
<keyword id="KW-0234">DNA repair</keyword>
<keyword id="KW-0238">DNA-binding</keyword>
<keyword id="KW-0378">Hydrolase</keyword>
<keyword id="KW-0547">Nucleotide-binding</keyword>
<keyword id="KW-1185">Reference proteome</keyword>
<feature type="chain" id="PRO_0000322808" description="Holliday junction branch migration complex subunit RuvB">
    <location>
        <begin position="1"/>
        <end position="336"/>
    </location>
</feature>
<feature type="region of interest" description="Large ATPase domain (RuvB-L)" evidence="1">
    <location>
        <begin position="1"/>
        <end position="184"/>
    </location>
</feature>
<feature type="region of interest" description="Small ATPAse domain (RuvB-S)" evidence="1">
    <location>
        <begin position="185"/>
        <end position="255"/>
    </location>
</feature>
<feature type="region of interest" description="Head domain (RuvB-H)" evidence="1">
    <location>
        <begin position="258"/>
        <end position="336"/>
    </location>
</feature>
<feature type="binding site" evidence="1">
    <location>
        <position position="23"/>
    </location>
    <ligand>
        <name>ATP</name>
        <dbReference type="ChEBI" id="CHEBI:30616"/>
    </ligand>
</feature>
<feature type="binding site" evidence="1">
    <location>
        <position position="24"/>
    </location>
    <ligand>
        <name>ATP</name>
        <dbReference type="ChEBI" id="CHEBI:30616"/>
    </ligand>
</feature>
<feature type="binding site" evidence="1">
    <location>
        <position position="65"/>
    </location>
    <ligand>
        <name>ATP</name>
        <dbReference type="ChEBI" id="CHEBI:30616"/>
    </ligand>
</feature>
<feature type="binding site" evidence="1">
    <location>
        <position position="68"/>
    </location>
    <ligand>
        <name>ATP</name>
        <dbReference type="ChEBI" id="CHEBI:30616"/>
    </ligand>
</feature>
<feature type="binding site" evidence="1">
    <location>
        <position position="69"/>
    </location>
    <ligand>
        <name>ATP</name>
        <dbReference type="ChEBI" id="CHEBI:30616"/>
    </ligand>
</feature>
<feature type="binding site" evidence="1">
    <location>
        <position position="69"/>
    </location>
    <ligand>
        <name>Mg(2+)</name>
        <dbReference type="ChEBI" id="CHEBI:18420"/>
    </ligand>
</feature>
<feature type="binding site" evidence="1">
    <location>
        <position position="70"/>
    </location>
    <ligand>
        <name>ATP</name>
        <dbReference type="ChEBI" id="CHEBI:30616"/>
    </ligand>
</feature>
<feature type="binding site" evidence="1">
    <location>
        <begin position="131"/>
        <end position="133"/>
    </location>
    <ligand>
        <name>ATP</name>
        <dbReference type="ChEBI" id="CHEBI:30616"/>
    </ligand>
</feature>
<feature type="binding site" evidence="1">
    <location>
        <position position="174"/>
    </location>
    <ligand>
        <name>ATP</name>
        <dbReference type="ChEBI" id="CHEBI:30616"/>
    </ligand>
</feature>
<feature type="binding site" evidence="1">
    <location>
        <position position="184"/>
    </location>
    <ligand>
        <name>ATP</name>
        <dbReference type="ChEBI" id="CHEBI:30616"/>
    </ligand>
</feature>
<feature type="binding site" evidence="1">
    <location>
        <position position="221"/>
    </location>
    <ligand>
        <name>ATP</name>
        <dbReference type="ChEBI" id="CHEBI:30616"/>
    </ligand>
</feature>
<feature type="binding site" evidence="1">
    <location>
        <position position="313"/>
    </location>
    <ligand>
        <name>DNA</name>
        <dbReference type="ChEBI" id="CHEBI:16991"/>
    </ligand>
</feature>
<feature type="binding site" evidence="1">
    <location>
        <position position="318"/>
    </location>
    <ligand>
        <name>DNA</name>
        <dbReference type="ChEBI" id="CHEBI:16991"/>
    </ligand>
</feature>
<evidence type="ECO:0000255" key="1">
    <source>
        <dbReference type="HAMAP-Rule" id="MF_00016"/>
    </source>
</evidence>
<comment type="function">
    <text evidence="1">The RuvA-RuvB-RuvC complex processes Holliday junction (HJ) DNA during genetic recombination and DNA repair, while the RuvA-RuvB complex plays an important role in the rescue of blocked DNA replication forks via replication fork reversal (RFR). RuvA specifically binds to HJ cruciform DNA, conferring on it an open structure. The RuvB hexamer acts as an ATP-dependent pump, pulling dsDNA into and through the RuvAB complex. RuvB forms 2 homohexamers on either side of HJ DNA bound by 1 or 2 RuvA tetramers; 4 subunits per hexamer contact DNA at a time. Coordinated motions by a converter formed by DNA-disengaged RuvB subunits stimulates ATP hydrolysis and nucleotide exchange. Immobilization of the converter enables RuvB to convert the ATP-contained energy into a lever motion, pulling 2 nucleotides of DNA out of the RuvA tetramer per ATP hydrolyzed, thus driving DNA branch migration. The RuvB motors rotate together with the DNA substrate, which together with the progressing nucleotide cycle form the mechanistic basis for DNA recombination by continuous HJ branch migration. Branch migration allows RuvC to scan DNA until it finds its consensus sequence, where it cleaves and resolves cruciform DNA.</text>
</comment>
<comment type="catalytic activity">
    <reaction evidence="1">
        <text>ATP + H2O = ADP + phosphate + H(+)</text>
        <dbReference type="Rhea" id="RHEA:13065"/>
        <dbReference type="ChEBI" id="CHEBI:15377"/>
        <dbReference type="ChEBI" id="CHEBI:15378"/>
        <dbReference type="ChEBI" id="CHEBI:30616"/>
        <dbReference type="ChEBI" id="CHEBI:43474"/>
        <dbReference type="ChEBI" id="CHEBI:456216"/>
    </reaction>
</comment>
<comment type="subunit">
    <text evidence="1">Homohexamer. Forms an RuvA(8)-RuvB(12)-Holliday junction (HJ) complex. HJ DNA is sandwiched between 2 RuvA tetramers; dsDNA enters through RuvA and exits via RuvB. An RuvB hexamer assembles on each DNA strand where it exits the tetramer. Each RuvB hexamer is contacted by two RuvA subunits (via domain III) on 2 adjacent RuvB subunits; this complex drives branch migration. In the full resolvosome a probable DNA-RuvA(4)-RuvB(12)-RuvC(2) complex forms which resolves the HJ.</text>
</comment>
<comment type="subcellular location">
    <subcellularLocation>
        <location evidence="1">Cytoplasm</location>
    </subcellularLocation>
</comment>
<comment type="domain">
    <text evidence="1">Has 3 domains, the large (RuvB-L) and small ATPase (RuvB-S) domains and the C-terminal head (RuvB-H) domain. The head domain binds DNA, while the ATPase domains jointly bind ATP, ADP or are empty depending on the state of the subunit in the translocation cycle. During a single DNA translocation step the structure of each domain remains the same, but their relative positions change.</text>
</comment>
<comment type="similarity">
    <text evidence="1">Belongs to the RuvB family.</text>
</comment>
<protein>
    <recommendedName>
        <fullName evidence="1">Holliday junction branch migration complex subunit RuvB</fullName>
        <ecNumber evidence="1">3.6.4.-</ecNumber>
    </recommendedName>
</protein>
<name>RUVB_LIGS1</name>
<organism>
    <name type="scientific">Ligilactobacillus salivarius (strain UCC118)</name>
    <name type="common">Lactobacillus salivarius</name>
    <dbReference type="NCBI Taxonomy" id="362948"/>
    <lineage>
        <taxon>Bacteria</taxon>
        <taxon>Bacillati</taxon>
        <taxon>Bacillota</taxon>
        <taxon>Bacilli</taxon>
        <taxon>Lactobacillales</taxon>
        <taxon>Lactobacillaceae</taxon>
        <taxon>Ligilactobacillus</taxon>
    </lineage>
</organism>
<reference key="1">
    <citation type="journal article" date="2006" name="Proc. Natl. Acad. Sci. U.S.A.">
        <title>Multireplicon genome architecture of Lactobacillus salivarius.</title>
        <authorList>
            <person name="Claesson M.J."/>
            <person name="Li Y."/>
            <person name="Leahy S."/>
            <person name="Canchaya C."/>
            <person name="van Pijkeren J.P."/>
            <person name="Cerdeno-Tarraga A.M."/>
            <person name="Parkhill J."/>
            <person name="Flynn S."/>
            <person name="O'Sullivan G.C."/>
            <person name="Collins J.K."/>
            <person name="Higgins D."/>
            <person name="Shanahan F."/>
            <person name="Fitzgerald G.F."/>
            <person name="van Sinderen D."/>
            <person name="O'Toole P.W."/>
        </authorList>
    </citation>
    <scope>NUCLEOTIDE SEQUENCE [LARGE SCALE GENOMIC DNA]</scope>
    <source>
        <strain>UCC118</strain>
    </source>
</reference>
<gene>
    <name evidence="1" type="primary">ruvB</name>
    <name type="ordered locus">LSL_1125</name>
</gene>
<dbReference type="EC" id="3.6.4.-" evidence="1"/>
<dbReference type="EMBL" id="CP000233">
    <property type="protein sequence ID" value="ABD99933.1"/>
    <property type="molecule type" value="Genomic_DNA"/>
</dbReference>
<dbReference type="RefSeq" id="WP_011476176.1">
    <property type="nucleotide sequence ID" value="NC_007929.1"/>
</dbReference>
<dbReference type="RefSeq" id="YP_536016.1">
    <property type="nucleotide sequence ID" value="NC_007929.1"/>
</dbReference>
<dbReference type="SMR" id="Q1WT18"/>
<dbReference type="STRING" id="362948.LSL_1125"/>
<dbReference type="KEGG" id="lsl:LSL_1125"/>
<dbReference type="PATRIC" id="fig|362948.14.peg.1198"/>
<dbReference type="HOGENOM" id="CLU_055599_1_0_9"/>
<dbReference type="OrthoDB" id="9804478at2"/>
<dbReference type="Proteomes" id="UP000006559">
    <property type="component" value="Chromosome"/>
</dbReference>
<dbReference type="GO" id="GO:0005737">
    <property type="term" value="C:cytoplasm"/>
    <property type="evidence" value="ECO:0007669"/>
    <property type="project" value="UniProtKB-SubCell"/>
</dbReference>
<dbReference type="GO" id="GO:0048476">
    <property type="term" value="C:Holliday junction resolvase complex"/>
    <property type="evidence" value="ECO:0007669"/>
    <property type="project" value="UniProtKB-UniRule"/>
</dbReference>
<dbReference type="GO" id="GO:0005524">
    <property type="term" value="F:ATP binding"/>
    <property type="evidence" value="ECO:0007669"/>
    <property type="project" value="UniProtKB-UniRule"/>
</dbReference>
<dbReference type="GO" id="GO:0016887">
    <property type="term" value="F:ATP hydrolysis activity"/>
    <property type="evidence" value="ECO:0007669"/>
    <property type="project" value="InterPro"/>
</dbReference>
<dbReference type="GO" id="GO:0000400">
    <property type="term" value="F:four-way junction DNA binding"/>
    <property type="evidence" value="ECO:0007669"/>
    <property type="project" value="UniProtKB-UniRule"/>
</dbReference>
<dbReference type="GO" id="GO:0009378">
    <property type="term" value="F:four-way junction helicase activity"/>
    <property type="evidence" value="ECO:0007669"/>
    <property type="project" value="InterPro"/>
</dbReference>
<dbReference type="GO" id="GO:0006310">
    <property type="term" value="P:DNA recombination"/>
    <property type="evidence" value="ECO:0007669"/>
    <property type="project" value="UniProtKB-UniRule"/>
</dbReference>
<dbReference type="GO" id="GO:0006281">
    <property type="term" value="P:DNA repair"/>
    <property type="evidence" value="ECO:0007669"/>
    <property type="project" value="UniProtKB-UniRule"/>
</dbReference>
<dbReference type="CDD" id="cd00009">
    <property type="entry name" value="AAA"/>
    <property type="match status" value="1"/>
</dbReference>
<dbReference type="Gene3D" id="1.10.8.60">
    <property type="match status" value="1"/>
</dbReference>
<dbReference type="Gene3D" id="3.40.50.300">
    <property type="entry name" value="P-loop containing nucleotide triphosphate hydrolases"/>
    <property type="match status" value="1"/>
</dbReference>
<dbReference type="Gene3D" id="1.10.10.10">
    <property type="entry name" value="Winged helix-like DNA-binding domain superfamily/Winged helix DNA-binding domain"/>
    <property type="match status" value="1"/>
</dbReference>
<dbReference type="HAMAP" id="MF_00016">
    <property type="entry name" value="DNA_HJ_migration_RuvB"/>
    <property type="match status" value="1"/>
</dbReference>
<dbReference type="InterPro" id="IPR003593">
    <property type="entry name" value="AAA+_ATPase"/>
</dbReference>
<dbReference type="InterPro" id="IPR041445">
    <property type="entry name" value="AAA_lid_4"/>
</dbReference>
<dbReference type="InterPro" id="IPR004605">
    <property type="entry name" value="DNA_helicase_Holl-junc_RuvB"/>
</dbReference>
<dbReference type="InterPro" id="IPR027417">
    <property type="entry name" value="P-loop_NTPase"/>
</dbReference>
<dbReference type="InterPro" id="IPR008824">
    <property type="entry name" value="RuvB-like_N"/>
</dbReference>
<dbReference type="InterPro" id="IPR008823">
    <property type="entry name" value="RuvB_C"/>
</dbReference>
<dbReference type="InterPro" id="IPR036388">
    <property type="entry name" value="WH-like_DNA-bd_sf"/>
</dbReference>
<dbReference type="InterPro" id="IPR036390">
    <property type="entry name" value="WH_DNA-bd_sf"/>
</dbReference>
<dbReference type="NCBIfam" id="NF000868">
    <property type="entry name" value="PRK00080.1"/>
    <property type="match status" value="1"/>
</dbReference>
<dbReference type="NCBIfam" id="TIGR00635">
    <property type="entry name" value="ruvB"/>
    <property type="match status" value="1"/>
</dbReference>
<dbReference type="PANTHER" id="PTHR42848">
    <property type="match status" value="1"/>
</dbReference>
<dbReference type="PANTHER" id="PTHR42848:SF1">
    <property type="entry name" value="HOLLIDAY JUNCTION BRANCH MIGRATION COMPLEX SUBUNIT RUVB"/>
    <property type="match status" value="1"/>
</dbReference>
<dbReference type="Pfam" id="PF17864">
    <property type="entry name" value="AAA_lid_4"/>
    <property type="match status" value="1"/>
</dbReference>
<dbReference type="Pfam" id="PF05491">
    <property type="entry name" value="RuvB_C"/>
    <property type="match status" value="1"/>
</dbReference>
<dbReference type="Pfam" id="PF05496">
    <property type="entry name" value="RuvB_N"/>
    <property type="match status" value="1"/>
</dbReference>
<dbReference type="SMART" id="SM00382">
    <property type="entry name" value="AAA"/>
    <property type="match status" value="1"/>
</dbReference>
<dbReference type="SUPFAM" id="SSF52540">
    <property type="entry name" value="P-loop containing nucleoside triphosphate hydrolases"/>
    <property type="match status" value="1"/>
</dbReference>
<dbReference type="SUPFAM" id="SSF46785">
    <property type="entry name" value="Winged helix' DNA-binding domain"/>
    <property type="match status" value="1"/>
</dbReference>
<proteinExistence type="inferred from homology"/>